<dbReference type="EMBL" id="CP000125">
    <property type="protein sequence ID" value="ABA52487.1"/>
    <property type="status" value="ALT_INIT"/>
    <property type="molecule type" value="Genomic_DNA"/>
</dbReference>
<dbReference type="RefSeq" id="WP_004523342.1">
    <property type="nucleotide sequence ID" value="NC_007435.1"/>
</dbReference>
<dbReference type="EnsemblBacteria" id="ABA52487">
    <property type="protein sequence ID" value="ABA52487"/>
    <property type="gene ID" value="BURPS1710b_A1343"/>
</dbReference>
<dbReference type="KEGG" id="bpm:BURPS1710b_A1343"/>
<dbReference type="HOGENOM" id="CLU_187346_0_1_4"/>
<dbReference type="Proteomes" id="UP000002700">
    <property type="component" value="Chromosome II"/>
</dbReference>
<dbReference type="GO" id="GO:0005886">
    <property type="term" value="C:plasma membrane"/>
    <property type="evidence" value="ECO:0007669"/>
    <property type="project" value="UniProtKB-SubCell"/>
</dbReference>
<dbReference type="HAMAP" id="MF_01361">
    <property type="entry name" value="UPF0391"/>
    <property type="match status" value="1"/>
</dbReference>
<dbReference type="InterPro" id="IPR009760">
    <property type="entry name" value="DUF1328"/>
</dbReference>
<dbReference type="NCBIfam" id="NF010226">
    <property type="entry name" value="PRK13682.1-1"/>
    <property type="match status" value="1"/>
</dbReference>
<dbReference type="NCBIfam" id="NF010229">
    <property type="entry name" value="PRK13682.1-4"/>
    <property type="match status" value="1"/>
</dbReference>
<dbReference type="Pfam" id="PF07043">
    <property type="entry name" value="DUF1328"/>
    <property type="match status" value="1"/>
</dbReference>
<dbReference type="PIRSF" id="PIRSF036466">
    <property type="entry name" value="UCP036466"/>
    <property type="match status" value="1"/>
</dbReference>
<organism>
    <name type="scientific">Burkholderia pseudomallei (strain 1710b)</name>
    <dbReference type="NCBI Taxonomy" id="320372"/>
    <lineage>
        <taxon>Bacteria</taxon>
        <taxon>Pseudomonadati</taxon>
        <taxon>Pseudomonadota</taxon>
        <taxon>Betaproteobacteria</taxon>
        <taxon>Burkholderiales</taxon>
        <taxon>Burkholderiaceae</taxon>
        <taxon>Burkholderia</taxon>
        <taxon>pseudomallei group</taxon>
    </lineage>
</organism>
<comment type="subcellular location">
    <subcellularLocation>
        <location evidence="1">Cell membrane</location>
        <topology evidence="1">Multi-pass membrane protein</topology>
    </subcellularLocation>
</comment>
<comment type="similarity">
    <text evidence="1">Belongs to the UPF0391 family.</text>
</comment>
<comment type="sequence caution" evidence="2">
    <conflict type="erroneous initiation">
        <sequence resource="EMBL-CDS" id="ABA52487"/>
    </conflict>
</comment>
<reference key="1">
    <citation type="journal article" date="2010" name="Genome Biol. Evol.">
        <title>Continuing evolution of Burkholderia mallei through genome reduction and large-scale rearrangements.</title>
        <authorList>
            <person name="Losada L."/>
            <person name="Ronning C.M."/>
            <person name="DeShazer D."/>
            <person name="Woods D."/>
            <person name="Fedorova N."/>
            <person name="Kim H.S."/>
            <person name="Shabalina S.A."/>
            <person name="Pearson T.R."/>
            <person name="Brinkac L."/>
            <person name="Tan P."/>
            <person name="Nandi T."/>
            <person name="Crabtree J."/>
            <person name="Badger J."/>
            <person name="Beckstrom-Sternberg S."/>
            <person name="Saqib M."/>
            <person name="Schutzer S.E."/>
            <person name="Keim P."/>
            <person name="Nierman W.C."/>
        </authorList>
    </citation>
    <scope>NUCLEOTIDE SEQUENCE [LARGE SCALE GENOMIC DNA]</scope>
    <source>
        <strain>1710b</strain>
    </source>
</reference>
<feature type="chain" id="PRO_0000256724" description="UPF0391 membrane protein BURPS1710b_A1343">
    <location>
        <begin position="1"/>
        <end position="53"/>
    </location>
</feature>
<feature type="transmembrane region" description="Helical" evidence="1">
    <location>
        <begin position="5"/>
        <end position="25"/>
    </location>
</feature>
<feature type="transmembrane region" description="Helical" evidence="1">
    <location>
        <begin position="30"/>
        <end position="50"/>
    </location>
</feature>
<accession>Q3JIV3</accession>
<keyword id="KW-1003">Cell membrane</keyword>
<keyword id="KW-0472">Membrane</keyword>
<keyword id="KW-0812">Transmembrane</keyword>
<keyword id="KW-1133">Transmembrane helix</keyword>
<protein>
    <recommendedName>
        <fullName evidence="1">UPF0391 membrane protein BURPS1710b_A1343</fullName>
    </recommendedName>
</protein>
<gene>
    <name type="ordered locus">BURPS1710b_A1343</name>
</gene>
<evidence type="ECO:0000255" key="1">
    <source>
        <dbReference type="HAMAP-Rule" id="MF_01361"/>
    </source>
</evidence>
<evidence type="ECO:0000305" key="2"/>
<proteinExistence type="inferred from homology"/>
<sequence>MLRYALIFFIIAIIAAVLGFGGIAAGAAEIAKILFYIFVVIFLVTLVLGVARR</sequence>
<name>Y5343_BURP1</name>